<comment type="function">
    <text evidence="1">Involved in the gluconeogenesis. Catalyzes stereospecifically the conversion of dihydroxyacetone phosphate (DHAP) to D-glyceraldehyde-3-phosphate (G3P).</text>
</comment>
<comment type="catalytic activity">
    <reaction evidence="1">
        <text>D-glyceraldehyde 3-phosphate = dihydroxyacetone phosphate</text>
        <dbReference type="Rhea" id="RHEA:18585"/>
        <dbReference type="ChEBI" id="CHEBI:57642"/>
        <dbReference type="ChEBI" id="CHEBI:59776"/>
        <dbReference type="EC" id="5.3.1.1"/>
    </reaction>
</comment>
<comment type="pathway">
    <text evidence="1">Carbohydrate biosynthesis; gluconeogenesis.</text>
</comment>
<comment type="pathway">
    <text evidence="1">Carbohydrate degradation; glycolysis; D-glyceraldehyde 3-phosphate from glycerone phosphate: step 1/1.</text>
</comment>
<comment type="subunit">
    <text evidence="1">Homodimer.</text>
</comment>
<comment type="subcellular location">
    <subcellularLocation>
        <location evidence="1">Cytoplasm</location>
    </subcellularLocation>
</comment>
<comment type="similarity">
    <text evidence="1">Belongs to the triosephosphate isomerase family.</text>
</comment>
<dbReference type="EC" id="5.3.1.1" evidence="1"/>
<dbReference type="EMBL" id="CP000672">
    <property type="protein sequence ID" value="ABR00223.1"/>
    <property type="molecule type" value="Genomic_DNA"/>
</dbReference>
<dbReference type="SMR" id="A5UHG7"/>
<dbReference type="KEGG" id="hiq:CGSHiGG_06675"/>
<dbReference type="HOGENOM" id="CLU_024251_2_1_6"/>
<dbReference type="UniPathway" id="UPA00109">
    <property type="reaction ID" value="UER00189"/>
</dbReference>
<dbReference type="UniPathway" id="UPA00138"/>
<dbReference type="Proteomes" id="UP000001990">
    <property type="component" value="Chromosome"/>
</dbReference>
<dbReference type="GO" id="GO:0005829">
    <property type="term" value="C:cytosol"/>
    <property type="evidence" value="ECO:0007669"/>
    <property type="project" value="TreeGrafter"/>
</dbReference>
<dbReference type="GO" id="GO:0004807">
    <property type="term" value="F:triose-phosphate isomerase activity"/>
    <property type="evidence" value="ECO:0007669"/>
    <property type="project" value="UniProtKB-UniRule"/>
</dbReference>
<dbReference type="GO" id="GO:0006094">
    <property type="term" value="P:gluconeogenesis"/>
    <property type="evidence" value="ECO:0007669"/>
    <property type="project" value="UniProtKB-UniRule"/>
</dbReference>
<dbReference type="GO" id="GO:0046166">
    <property type="term" value="P:glyceraldehyde-3-phosphate biosynthetic process"/>
    <property type="evidence" value="ECO:0007669"/>
    <property type="project" value="TreeGrafter"/>
</dbReference>
<dbReference type="GO" id="GO:0019563">
    <property type="term" value="P:glycerol catabolic process"/>
    <property type="evidence" value="ECO:0007669"/>
    <property type="project" value="TreeGrafter"/>
</dbReference>
<dbReference type="GO" id="GO:0006096">
    <property type="term" value="P:glycolytic process"/>
    <property type="evidence" value="ECO:0007669"/>
    <property type="project" value="UniProtKB-UniRule"/>
</dbReference>
<dbReference type="CDD" id="cd00311">
    <property type="entry name" value="TIM"/>
    <property type="match status" value="1"/>
</dbReference>
<dbReference type="FunFam" id="3.20.20.70:FF:000020">
    <property type="entry name" value="Triosephosphate isomerase"/>
    <property type="match status" value="1"/>
</dbReference>
<dbReference type="Gene3D" id="3.20.20.70">
    <property type="entry name" value="Aldolase class I"/>
    <property type="match status" value="1"/>
</dbReference>
<dbReference type="HAMAP" id="MF_00147_B">
    <property type="entry name" value="TIM_B"/>
    <property type="match status" value="1"/>
</dbReference>
<dbReference type="InterPro" id="IPR013785">
    <property type="entry name" value="Aldolase_TIM"/>
</dbReference>
<dbReference type="InterPro" id="IPR035990">
    <property type="entry name" value="TIM_sf"/>
</dbReference>
<dbReference type="InterPro" id="IPR022896">
    <property type="entry name" value="TrioseP_Isoase_bac/euk"/>
</dbReference>
<dbReference type="InterPro" id="IPR000652">
    <property type="entry name" value="Triosephosphate_isomerase"/>
</dbReference>
<dbReference type="InterPro" id="IPR020861">
    <property type="entry name" value="Triosephosphate_isomerase_AS"/>
</dbReference>
<dbReference type="NCBIfam" id="TIGR00419">
    <property type="entry name" value="tim"/>
    <property type="match status" value="1"/>
</dbReference>
<dbReference type="PANTHER" id="PTHR21139">
    <property type="entry name" value="TRIOSEPHOSPHATE ISOMERASE"/>
    <property type="match status" value="1"/>
</dbReference>
<dbReference type="PANTHER" id="PTHR21139:SF42">
    <property type="entry name" value="TRIOSEPHOSPHATE ISOMERASE"/>
    <property type="match status" value="1"/>
</dbReference>
<dbReference type="Pfam" id="PF00121">
    <property type="entry name" value="TIM"/>
    <property type="match status" value="1"/>
</dbReference>
<dbReference type="SUPFAM" id="SSF51351">
    <property type="entry name" value="Triosephosphate isomerase (TIM)"/>
    <property type="match status" value="1"/>
</dbReference>
<dbReference type="PROSITE" id="PS00171">
    <property type="entry name" value="TIM_1"/>
    <property type="match status" value="1"/>
</dbReference>
<dbReference type="PROSITE" id="PS51440">
    <property type="entry name" value="TIM_2"/>
    <property type="match status" value="1"/>
</dbReference>
<feature type="chain" id="PRO_0000307475" description="Triosephosphate isomerase">
    <location>
        <begin position="1"/>
        <end position="263"/>
    </location>
</feature>
<feature type="active site" description="Electrophile" evidence="1">
    <location>
        <position position="104"/>
    </location>
</feature>
<feature type="active site" description="Proton acceptor" evidence="1">
    <location>
        <position position="176"/>
    </location>
</feature>
<feature type="binding site" evidence="1">
    <location>
        <begin position="10"/>
        <end position="12"/>
    </location>
    <ligand>
        <name>substrate</name>
    </ligand>
</feature>
<feature type="binding site" evidence="1">
    <location>
        <position position="182"/>
    </location>
    <ligand>
        <name>substrate</name>
    </ligand>
</feature>
<feature type="binding site" evidence="1">
    <location>
        <position position="221"/>
    </location>
    <ligand>
        <name>substrate</name>
    </ligand>
</feature>
<feature type="binding site" evidence="1">
    <location>
        <begin position="242"/>
        <end position="243"/>
    </location>
    <ligand>
        <name>substrate</name>
    </ligand>
</feature>
<keyword id="KW-0963">Cytoplasm</keyword>
<keyword id="KW-0312">Gluconeogenesis</keyword>
<keyword id="KW-0324">Glycolysis</keyword>
<keyword id="KW-0413">Isomerase</keyword>
<accession>A5UHG7</accession>
<name>TPIS_HAEIG</name>
<protein>
    <recommendedName>
        <fullName evidence="1">Triosephosphate isomerase</fullName>
        <shortName evidence="1">TIM</shortName>
        <shortName evidence="1">TPI</shortName>
        <ecNumber evidence="1">5.3.1.1</ecNumber>
    </recommendedName>
    <alternativeName>
        <fullName evidence="1">Triose-phosphate isomerase</fullName>
    </alternativeName>
</protein>
<sequence length="263" mass="27273">MARRPLVMGNWKLNGSKAFTKELIEGLKAELHDVTGCDVAIAPPVMYLGTAEAALSGCGCSCGGKSVIQLGAQNVDINVKGAFTGDISSEMLKDFGAKYIIIGHSERRTYHKESDEFVAKKFGALKEAGLVPVLCIGESEAENEAGKTEEVCARQIDAVINALGVEAFNGAVIAYEPIWAIGTGKSATPAQAQAVHAFIRGHIAAKSQAVAEQVIIQYGGSVNDANAAELFTQPDIDGALVGGASLKAPAFAVIVKAAAAAKN</sequence>
<reference key="1">
    <citation type="journal article" date="2007" name="Genome Biol.">
        <title>Characterization and modeling of the Haemophilus influenzae core and supragenomes based on the complete genomic sequences of Rd and 12 clinical nontypeable strains.</title>
        <authorList>
            <person name="Hogg J.S."/>
            <person name="Hu F.Z."/>
            <person name="Janto B."/>
            <person name="Boissy R."/>
            <person name="Hayes J."/>
            <person name="Keefe R."/>
            <person name="Post J.C."/>
            <person name="Ehrlich G.D."/>
        </authorList>
    </citation>
    <scope>NUCLEOTIDE SEQUENCE [LARGE SCALE GENOMIC DNA]</scope>
    <source>
        <strain>PittGG</strain>
    </source>
</reference>
<proteinExistence type="inferred from homology"/>
<evidence type="ECO:0000255" key="1">
    <source>
        <dbReference type="HAMAP-Rule" id="MF_00147"/>
    </source>
</evidence>
<organism>
    <name type="scientific">Haemophilus influenzae (strain PittGG)</name>
    <dbReference type="NCBI Taxonomy" id="374931"/>
    <lineage>
        <taxon>Bacteria</taxon>
        <taxon>Pseudomonadati</taxon>
        <taxon>Pseudomonadota</taxon>
        <taxon>Gammaproteobacteria</taxon>
        <taxon>Pasteurellales</taxon>
        <taxon>Pasteurellaceae</taxon>
        <taxon>Haemophilus</taxon>
    </lineage>
</organism>
<gene>
    <name evidence="1" type="primary">tpiA</name>
    <name type="ordered locus">CGSHiGG_06675</name>
</gene>